<dbReference type="EMBL" id="M99063">
    <property type="protein sequence ID" value="AAA35746.1"/>
    <property type="molecule type" value="mRNA"/>
</dbReference>
<dbReference type="EMBL" id="AJ564103">
    <property type="protein sequence ID" value="CAD91891.1"/>
    <property type="molecule type" value="Genomic_DNA"/>
</dbReference>
<dbReference type="EMBL" id="AK299390">
    <property type="protein sequence ID" value="BAG61375.1"/>
    <property type="status" value="ALT_SEQ"/>
    <property type="molecule type" value="mRNA"/>
</dbReference>
<dbReference type="EMBL" id="AC068988">
    <property type="status" value="NOT_ANNOTATED_CDS"/>
    <property type="molecule type" value="Genomic_DNA"/>
</dbReference>
<dbReference type="EMBL" id="AC139763">
    <property type="status" value="NOT_ANNOTATED_CDS"/>
    <property type="molecule type" value="Genomic_DNA"/>
</dbReference>
<dbReference type="CCDS" id="CCDS8838.1"/>
<dbReference type="PIR" id="I53169">
    <property type="entry name" value="I53169"/>
</dbReference>
<dbReference type="RefSeq" id="NP_056932.2">
    <property type="nucleotide sequence ID" value="NM_015848.4"/>
</dbReference>
<dbReference type="SMR" id="Q01546"/>
<dbReference type="BioGRID" id="119492">
    <property type="interactions" value="83"/>
</dbReference>
<dbReference type="FunCoup" id="Q01546">
    <property type="interactions" value="84"/>
</dbReference>
<dbReference type="IntAct" id="Q01546">
    <property type="interactions" value="53"/>
</dbReference>
<dbReference type="MINT" id="Q01546"/>
<dbReference type="STRING" id="9606.ENSP00000330101"/>
<dbReference type="GlyGen" id="Q01546">
    <property type="glycosylation" value="2 sites, 1 N-linked glycan (1 site), 1 O-linked glycan (1 site)"/>
</dbReference>
<dbReference type="iPTMnet" id="Q01546"/>
<dbReference type="PhosphoSitePlus" id="Q01546"/>
<dbReference type="SwissPalm" id="Q01546"/>
<dbReference type="BioMuta" id="KRT76"/>
<dbReference type="DMDM" id="317373371"/>
<dbReference type="jPOST" id="Q01546"/>
<dbReference type="MassIVE" id="Q01546"/>
<dbReference type="PaxDb" id="9606-ENSP00000330101"/>
<dbReference type="PeptideAtlas" id="Q01546"/>
<dbReference type="PRIDE" id="Q01546"/>
<dbReference type="ProteomicsDB" id="57971"/>
<dbReference type="Antibodypedia" id="14669">
    <property type="antibodies" value="708 antibodies from 24 providers"/>
</dbReference>
<dbReference type="DNASU" id="51350"/>
<dbReference type="Ensembl" id="ENST00000332411.2">
    <property type="protein sequence ID" value="ENSP00000330101.2"/>
    <property type="gene ID" value="ENSG00000185069.2"/>
</dbReference>
<dbReference type="GeneID" id="51350"/>
<dbReference type="KEGG" id="hsa:51350"/>
<dbReference type="MANE-Select" id="ENST00000332411.2">
    <property type="protein sequence ID" value="ENSP00000330101.2"/>
    <property type="RefSeq nucleotide sequence ID" value="NM_015848.4"/>
    <property type="RefSeq protein sequence ID" value="NP_056932.2"/>
</dbReference>
<dbReference type="UCSC" id="uc001sax.3">
    <property type="organism name" value="human"/>
</dbReference>
<dbReference type="AGR" id="HGNC:24430"/>
<dbReference type="CTD" id="51350"/>
<dbReference type="DisGeNET" id="51350"/>
<dbReference type="GeneCards" id="KRT76"/>
<dbReference type="HGNC" id="HGNC:24430">
    <property type="gene designation" value="KRT76"/>
</dbReference>
<dbReference type="HPA" id="ENSG00000185069">
    <property type="expression patterns" value="Group enriched (lymphoid tissue, salivary gland)"/>
</dbReference>
<dbReference type="MIM" id="616671">
    <property type="type" value="gene"/>
</dbReference>
<dbReference type="neXtProt" id="NX_Q01546"/>
<dbReference type="OpenTargets" id="ENSG00000185069"/>
<dbReference type="PharmGKB" id="PA147357785"/>
<dbReference type="VEuPathDB" id="HostDB:ENSG00000185069"/>
<dbReference type="eggNOG" id="ENOG502QURK">
    <property type="taxonomic scope" value="Eukaryota"/>
</dbReference>
<dbReference type="GeneTree" id="ENSGT00940000162365"/>
<dbReference type="HOGENOM" id="CLU_012560_6_0_1"/>
<dbReference type="InParanoid" id="Q01546"/>
<dbReference type="OMA" id="FESYINF"/>
<dbReference type="OrthoDB" id="2441647at2759"/>
<dbReference type="PAN-GO" id="Q01546">
    <property type="GO annotations" value="4 GO annotations based on evolutionary models"/>
</dbReference>
<dbReference type="PhylomeDB" id="Q01546"/>
<dbReference type="TreeFam" id="TF317854"/>
<dbReference type="PathwayCommons" id="Q01546"/>
<dbReference type="Reactome" id="R-HSA-6805567">
    <property type="pathway name" value="Keratinization"/>
</dbReference>
<dbReference type="Reactome" id="R-HSA-6809371">
    <property type="pathway name" value="Formation of the cornified envelope"/>
</dbReference>
<dbReference type="SignaLink" id="Q01546"/>
<dbReference type="BioGRID-ORCS" id="51350">
    <property type="hits" value="11 hits in 1146 CRISPR screens"/>
</dbReference>
<dbReference type="GenomeRNAi" id="51350"/>
<dbReference type="Pharos" id="Q01546">
    <property type="development level" value="Tdark"/>
</dbReference>
<dbReference type="PRO" id="PR:Q01546"/>
<dbReference type="Proteomes" id="UP000005640">
    <property type="component" value="Chromosome 12"/>
</dbReference>
<dbReference type="RNAct" id="Q01546">
    <property type="molecule type" value="protein"/>
</dbReference>
<dbReference type="Bgee" id="ENSG00000185069">
    <property type="expression patterns" value="Expressed in gingiva and 17 other cell types or tissues"/>
</dbReference>
<dbReference type="GO" id="GO:0005829">
    <property type="term" value="C:cytosol"/>
    <property type="evidence" value="ECO:0000304"/>
    <property type="project" value="Reactome"/>
</dbReference>
<dbReference type="GO" id="GO:0070062">
    <property type="term" value="C:extracellular exosome"/>
    <property type="evidence" value="ECO:0007005"/>
    <property type="project" value="UniProtKB"/>
</dbReference>
<dbReference type="GO" id="GO:0005882">
    <property type="term" value="C:intermediate filament"/>
    <property type="evidence" value="ECO:0000303"/>
    <property type="project" value="UniProtKB"/>
</dbReference>
<dbReference type="GO" id="GO:0045095">
    <property type="term" value="C:keratin filament"/>
    <property type="evidence" value="ECO:0000318"/>
    <property type="project" value="GO_Central"/>
</dbReference>
<dbReference type="GO" id="GO:0005634">
    <property type="term" value="C:nucleus"/>
    <property type="evidence" value="ECO:0007005"/>
    <property type="project" value="UniProtKB"/>
</dbReference>
<dbReference type="GO" id="GO:0030280">
    <property type="term" value="F:structural constituent of skin epidermis"/>
    <property type="evidence" value="ECO:0000318"/>
    <property type="project" value="GO_Central"/>
</dbReference>
<dbReference type="GO" id="GO:0007010">
    <property type="term" value="P:cytoskeleton organization"/>
    <property type="evidence" value="ECO:0000303"/>
    <property type="project" value="UniProtKB"/>
</dbReference>
<dbReference type="GO" id="GO:0045109">
    <property type="term" value="P:intermediate filament organization"/>
    <property type="evidence" value="ECO:0000318"/>
    <property type="project" value="GO_Central"/>
</dbReference>
<dbReference type="GO" id="GO:0031424">
    <property type="term" value="P:keratinization"/>
    <property type="evidence" value="ECO:0000318"/>
    <property type="project" value="GO_Central"/>
</dbReference>
<dbReference type="GO" id="GO:0043473">
    <property type="term" value="P:pigmentation"/>
    <property type="evidence" value="ECO:0007669"/>
    <property type="project" value="Ensembl"/>
</dbReference>
<dbReference type="GO" id="GO:0048733">
    <property type="term" value="P:sebaceous gland development"/>
    <property type="evidence" value="ECO:0007669"/>
    <property type="project" value="Ensembl"/>
</dbReference>
<dbReference type="FunFam" id="1.20.5.1160:FF:000001">
    <property type="entry name" value="Keratin type II"/>
    <property type="match status" value="1"/>
</dbReference>
<dbReference type="FunFam" id="1.20.5.170:FF:000004">
    <property type="entry name" value="Keratin, type II cytoskeletal 5"/>
    <property type="match status" value="1"/>
</dbReference>
<dbReference type="FunFam" id="1.20.5.500:FF:000001">
    <property type="entry name" value="Type II keratin 23"/>
    <property type="match status" value="1"/>
</dbReference>
<dbReference type="Gene3D" id="1.20.5.170">
    <property type="match status" value="1"/>
</dbReference>
<dbReference type="Gene3D" id="1.20.5.500">
    <property type="entry name" value="Single helix bin"/>
    <property type="match status" value="1"/>
</dbReference>
<dbReference type="Gene3D" id="1.20.5.1160">
    <property type="entry name" value="Vasodilator-stimulated phosphoprotein"/>
    <property type="match status" value="1"/>
</dbReference>
<dbReference type="InterPro" id="IPR018039">
    <property type="entry name" value="IF_conserved"/>
</dbReference>
<dbReference type="InterPro" id="IPR039008">
    <property type="entry name" value="IF_rod_dom"/>
</dbReference>
<dbReference type="InterPro" id="IPR032444">
    <property type="entry name" value="Keratin_2_head"/>
</dbReference>
<dbReference type="InterPro" id="IPR003054">
    <property type="entry name" value="Keratin_II"/>
</dbReference>
<dbReference type="PANTHER" id="PTHR45616">
    <property type="entry name" value="GATA-TYPE DOMAIN-CONTAINING PROTEIN"/>
    <property type="match status" value="1"/>
</dbReference>
<dbReference type="PANTHER" id="PTHR45616:SF29">
    <property type="entry name" value="KERATIN, TYPE II CYTOSKELETAL 2 ORAL"/>
    <property type="match status" value="1"/>
</dbReference>
<dbReference type="Pfam" id="PF00038">
    <property type="entry name" value="Filament"/>
    <property type="match status" value="1"/>
</dbReference>
<dbReference type="Pfam" id="PF16208">
    <property type="entry name" value="Keratin_2_head"/>
    <property type="match status" value="1"/>
</dbReference>
<dbReference type="PRINTS" id="PR01276">
    <property type="entry name" value="TYPE2KERATIN"/>
</dbReference>
<dbReference type="SMART" id="SM01391">
    <property type="entry name" value="Filament"/>
    <property type="match status" value="1"/>
</dbReference>
<dbReference type="SUPFAM" id="SSF64593">
    <property type="entry name" value="Intermediate filament protein, coiled coil region"/>
    <property type="match status" value="3"/>
</dbReference>
<dbReference type="PROSITE" id="PS00226">
    <property type="entry name" value="IF_ROD_1"/>
    <property type="match status" value="1"/>
</dbReference>
<dbReference type="PROSITE" id="PS51842">
    <property type="entry name" value="IF_ROD_2"/>
    <property type="match status" value="1"/>
</dbReference>
<reference key="1">
    <citation type="journal article" date="1992" name="Differentiation">
        <title>Suprabasal marker proteins distinguishing keratinizing squamous epithelia: cytokeratin 2 polypeptides of oral masticatory epithelium and epidermis are different.</title>
        <authorList>
            <person name="Collin C."/>
            <person name="Ouhayoun J.P."/>
            <person name="Grund C."/>
            <person name="Franke W.W."/>
        </authorList>
    </citation>
    <scope>NUCLEOTIDE SEQUENCE [MRNA]</scope>
    <scope>FUNCTION</scope>
    <scope>DEVELOPMENTAL STAGE</scope>
    <scope>VARIANT THR-359</scope>
</reference>
<reference key="2">
    <citation type="journal article" date="2005" name="J. Invest. Dermatol.">
        <title>Characterization of new members of the human type II keratin gene family and a general evaluation of the keratin gene domain on chromosome 12q13.13.</title>
        <authorList>
            <person name="Rogers M.A."/>
            <person name="Edler L."/>
            <person name="Winter H."/>
            <person name="Langbein L."/>
            <person name="Beckmann I."/>
            <person name="Schweizer J."/>
        </authorList>
    </citation>
    <scope>NUCLEOTIDE SEQUENCE [GENOMIC DNA]</scope>
</reference>
<reference key="3">
    <citation type="journal article" date="2004" name="Nat. Genet.">
        <title>Complete sequencing and characterization of 21,243 full-length human cDNAs.</title>
        <authorList>
            <person name="Ota T."/>
            <person name="Suzuki Y."/>
            <person name="Nishikawa T."/>
            <person name="Otsuki T."/>
            <person name="Sugiyama T."/>
            <person name="Irie R."/>
            <person name="Wakamatsu A."/>
            <person name="Hayashi K."/>
            <person name="Sato H."/>
            <person name="Nagai K."/>
            <person name="Kimura K."/>
            <person name="Makita H."/>
            <person name="Sekine M."/>
            <person name="Obayashi M."/>
            <person name="Nishi T."/>
            <person name="Shibahara T."/>
            <person name="Tanaka T."/>
            <person name="Ishii S."/>
            <person name="Yamamoto J."/>
            <person name="Saito K."/>
            <person name="Kawai Y."/>
            <person name="Isono Y."/>
            <person name="Nakamura Y."/>
            <person name="Nagahari K."/>
            <person name="Murakami K."/>
            <person name="Yasuda T."/>
            <person name="Iwayanagi T."/>
            <person name="Wagatsuma M."/>
            <person name="Shiratori A."/>
            <person name="Sudo H."/>
            <person name="Hosoiri T."/>
            <person name="Kaku Y."/>
            <person name="Kodaira H."/>
            <person name="Kondo H."/>
            <person name="Sugawara M."/>
            <person name="Takahashi M."/>
            <person name="Kanda K."/>
            <person name="Yokoi T."/>
            <person name="Furuya T."/>
            <person name="Kikkawa E."/>
            <person name="Omura Y."/>
            <person name="Abe K."/>
            <person name="Kamihara K."/>
            <person name="Katsuta N."/>
            <person name="Sato K."/>
            <person name="Tanikawa M."/>
            <person name="Yamazaki M."/>
            <person name="Ninomiya K."/>
            <person name="Ishibashi T."/>
            <person name="Yamashita H."/>
            <person name="Murakawa K."/>
            <person name="Fujimori K."/>
            <person name="Tanai H."/>
            <person name="Kimata M."/>
            <person name="Watanabe M."/>
            <person name="Hiraoka S."/>
            <person name="Chiba Y."/>
            <person name="Ishida S."/>
            <person name="Ono Y."/>
            <person name="Takiguchi S."/>
            <person name="Watanabe S."/>
            <person name="Yosida M."/>
            <person name="Hotuta T."/>
            <person name="Kusano J."/>
            <person name="Kanehori K."/>
            <person name="Takahashi-Fujii A."/>
            <person name="Hara H."/>
            <person name="Tanase T.-O."/>
            <person name="Nomura Y."/>
            <person name="Togiya S."/>
            <person name="Komai F."/>
            <person name="Hara R."/>
            <person name="Takeuchi K."/>
            <person name="Arita M."/>
            <person name="Imose N."/>
            <person name="Musashino K."/>
            <person name="Yuuki H."/>
            <person name="Oshima A."/>
            <person name="Sasaki N."/>
            <person name="Aotsuka S."/>
            <person name="Yoshikawa Y."/>
            <person name="Matsunawa H."/>
            <person name="Ichihara T."/>
            <person name="Shiohata N."/>
            <person name="Sano S."/>
            <person name="Moriya S."/>
            <person name="Momiyama H."/>
            <person name="Satoh N."/>
            <person name="Takami S."/>
            <person name="Terashima Y."/>
            <person name="Suzuki O."/>
            <person name="Nakagawa S."/>
            <person name="Senoh A."/>
            <person name="Mizoguchi H."/>
            <person name="Goto Y."/>
            <person name="Shimizu F."/>
            <person name="Wakebe H."/>
            <person name="Hishigaki H."/>
            <person name="Watanabe T."/>
            <person name="Sugiyama A."/>
            <person name="Takemoto M."/>
            <person name="Kawakami B."/>
            <person name="Yamazaki M."/>
            <person name="Watanabe K."/>
            <person name="Kumagai A."/>
            <person name="Itakura S."/>
            <person name="Fukuzumi Y."/>
            <person name="Fujimori Y."/>
            <person name="Komiyama M."/>
            <person name="Tashiro H."/>
            <person name="Tanigami A."/>
            <person name="Fujiwara T."/>
            <person name="Ono T."/>
            <person name="Yamada K."/>
            <person name="Fujii Y."/>
            <person name="Ozaki K."/>
            <person name="Hirao M."/>
            <person name="Ohmori Y."/>
            <person name="Kawabata A."/>
            <person name="Hikiji T."/>
            <person name="Kobatake N."/>
            <person name="Inagaki H."/>
            <person name="Ikema Y."/>
            <person name="Okamoto S."/>
            <person name="Okitani R."/>
            <person name="Kawakami T."/>
            <person name="Noguchi S."/>
            <person name="Itoh T."/>
            <person name="Shigeta K."/>
            <person name="Senba T."/>
            <person name="Matsumura K."/>
            <person name="Nakajima Y."/>
            <person name="Mizuno T."/>
            <person name="Morinaga M."/>
            <person name="Sasaki M."/>
            <person name="Togashi T."/>
            <person name="Oyama M."/>
            <person name="Hata H."/>
            <person name="Watanabe M."/>
            <person name="Komatsu T."/>
            <person name="Mizushima-Sugano J."/>
            <person name="Satoh T."/>
            <person name="Shirai Y."/>
            <person name="Takahashi Y."/>
            <person name="Nakagawa K."/>
            <person name="Okumura K."/>
            <person name="Nagase T."/>
            <person name="Nomura N."/>
            <person name="Kikuchi H."/>
            <person name="Masuho Y."/>
            <person name="Yamashita R."/>
            <person name="Nakai K."/>
            <person name="Yada T."/>
            <person name="Nakamura Y."/>
            <person name="Ohara O."/>
            <person name="Isogai T."/>
            <person name="Sugano S."/>
        </authorList>
    </citation>
    <scope>NUCLEOTIDE SEQUENCE [LARGE SCALE MRNA]</scope>
    <source>
        <tissue>Tongue</tissue>
    </source>
</reference>
<reference key="4">
    <citation type="journal article" date="2006" name="Nature">
        <title>The finished DNA sequence of human chromosome 12.</title>
        <authorList>
            <person name="Scherer S.E."/>
            <person name="Muzny D.M."/>
            <person name="Buhay C.J."/>
            <person name="Chen R."/>
            <person name="Cree A."/>
            <person name="Ding Y."/>
            <person name="Dugan-Rocha S."/>
            <person name="Gill R."/>
            <person name="Gunaratne P."/>
            <person name="Harris R.A."/>
            <person name="Hawes A.C."/>
            <person name="Hernandez J."/>
            <person name="Hodgson A.V."/>
            <person name="Hume J."/>
            <person name="Jackson A."/>
            <person name="Khan Z.M."/>
            <person name="Kovar-Smith C."/>
            <person name="Lewis L.R."/>
            <person name="Lozado R.J."/>
            <person name="Metzker M.L."/>
            <person name="Milosavljevic A."/>
            <person name="Miner G.R."/>
            <person name="Montgomery K.T."/>
            <person name="Morgan M.B."/>
            <person name="Nazareth L.V."/>
            <person name="Scott G."/>
            <person name="Sodergren E."/>
            <person name="Song X.-Z."/>
            <person name="Steffen D."/>
            <person name="Lovering R.C."/>
            <person name="Wheeler D.A."/>
            <person name="Worley K.C."/>
            <person name="Yuan Y."/>
            <person name="Zhang Z."/>
            <person name="Adams C.Q."/>
            <person name="Ansari-Lari M.A."/>
            <person name="Ayele M."/>
            <person name="Brown M.J."/>
            <person name="Chen G."/>
            <person name="Chen Z."/>
            <person name="Clerc-Blankenburg K.P."/>
            <person name="Davis C."/>
            <person name="Delgado O."/>
            <person name="Dinh H.H."/>
            <person name="Draper H."/>
            <person name="Gonzalez-Garay M.L."/>
            <person name="Havlak P."/>
            <person name="Jackson L.R."/>
            <person name="Jacob L.S."/>
            <person name="Kelly S.H."/>
            <person name="Li L."/>
            <person name="Li Z."/>
            <person name="Liu J."/>
            <person name="Liu W."/>
            <person name="Lu J."/>
            <person name="Maheshwari M."/>
            <person name="Nguyen B.-V."/>
            <person name="Okwuonu G.O."/>
            <person name="Pasternak S."/>
            <person name="Perez L.M."/>
            <person name="Plopper F.J.H."/>
            <person name="Santibanez J."/>
            <person name="Shen H."/>
            <person name="Tabor P.E."/>
            <person name="Verduzco D."/>
            <person name="Waldron L."/>
            <person name="Wang Q."/>
            <person name="Williams G.A."/>
            <person name="Zhang J."/>
            <person name="Zhou J."/>
            <person name="Allen C.C."/>
            <person name="Amin A.G."/>
            <person name="Anyalebechi V."/>
            <person name="Bailey M."/>
            <person name="Barbaria J.A."/>
            <person name="Bimage K.E."/>
            <person name="Bryant N.P."/>
            <person name="Burch P.E."/>
            <person name="Burkett C.E."/>
            <person name="Burrell K.L."/>
            <person name="Calderon E."/>
            <person name="Cardenas V."/>
            <person name="Carter K."/>
            <person name="Casias K."/>
            <person name="Cavazos I."/>
            <person name="Cavazos S.R."/>
            <person name="Ceasar H."/>
            <person name="Chacko J."/>
            <person name="Chan S.N."/>
            <person name="Chavez D."/>
            <person name="Christopoulos C."/>
            <person name="Chu J."/>
            <person name="Cockrell R."/>
            <person name="Cox C.D."/>
            <person name="Dang M."/>
            <person name="Dathorne S.R."/>
            <person name="David R."/>
            <person name="Davis C.M."/>
            <person name="Davy-Carroll L."/>
            <person name="Deshazo D.R."/>
            <person name="Donlin J.E."/>
            <person name="D'Souza L."/>
            <person name="Eaves K.A."/>
            <person name="Egan A."/>
            <person name="Emery-Cohen A.J."/>
            <person name="Escotto M."/>
            <person name="Flagg N."/>
            <person name="Forbes L.D."/>
            <person name="Gabisi A.M."/>
            <person name="Garza M."/>
            <person name="Hamilton C."/>
            <person name="Henderson N."/>
            <person name="Hernandez O."/>
            <person name="Hines S."/>
            <person name="Hogues M.E."/>
            <person name="Huang M."/>
            <person name="Idlebird D.G."/>
            <person name="Johnson R."/>
            <person name="Jolivet A."/>
            <person name="Jones S."/>
            <person name="Kagan R."/>
            <person name="King L.M."/>
            <person name="Leal B."/>
            <person name="Lebow H."/>
            <person name="Lee S."/>
            <person name="LeVan J.M."/>
            <person name="Lewis L.C."/>
            <person name="London P."/>
            <person name="Lorensuhewa L.M."/>
            <person name="Loulseged H."/>
            <person name="Lovett D.A."/>
            <person name="Lucier A."/>
            <person name="Lucier R.L."/>
            <person name="Ma J."/>
            <person name="Madu R.C."/>
            <person name="Mapua P."/>
            <person name="Martindale A.D."/>
            <person name="Martinez E."/>
            <person name="Massey E."/>
            <person name="Mawhiney S."/>
            <person name="Meador M.G."/>
            <person name="Mendez S."/>
            <person name="Mercado C."/>
            <person name="Mercado I.C."/>
            <person name="Merritt C.E."/>
            <person name="Miner Z.L."/>
            <person name="Minja E."/>
            <person name="Mitchell T."/>
            <person name="Mohabbat F."/>
            <person name="Mohabbat K."/>
            <person name="Montgomery B."/>
            <person name="Moore N."/>
            <person name="Morris S."/>
            <person name="Munidasa M."/>
            <person name="Ngo R.N."/>
            <person name="Nguyen N.B."/>
            <person name="Nickerson E."/>
            <person name="Nwaokelemeh O.O."/>
            <person name="Nwokenkwo S."/>
            <person name="Obregon M."/>
            <person name="Oguh M."/>
            <person name="Oragunye N."/>
            <person name="Oviedo R.J."/>
            <person name="Parish B.J."/>
            <person name="Parker D.N."/>
            <person name="Parrish J."/>
            <person name="Parks K.L."/>
            <person name="Paul H.A."/>
            <person name="Payton B.A."/>
            <person name="Perez A."/>
            <person name="Perrin W."/>
            <person name="Pickens A."/>
            <person name="Primus E.L."/>
            <person name="Pu L.-L."/>
            <person name="Puazo M."/>
            <person name="Quiles M.M."/>
            <person name="Quiroz J.B."/>
            <person name="Rabata D."/>
            <person name="Reeves K."/>
            <person name="Ruiz S.J."/>
            <person name="Shao H."/>
            <person name="Sisson I."/>
            <person name="Sonaike T."/>
            <person name="Sorelle R.P."/>
            <person name="Sutton A.E."/>
            <person name="Svatek A.F."/>
            <person name="Svetz L.A."/>
            <person name="Tamerisa K.S."/>
            <person name="Taylor T.R."/>
            <person name="Teague B."/>
            <person name="Thomas N."/>
            <person name="Thorn R.D."/>
            <person name="Trejos Z.Y."/>
            <person name="Trevino B.K."/>
            <person name="Ukegbu O.N."/>
            <person name="Urban J.B."/>
            <person name="Vasquez L.I."/>
            <person name="Vera V.A."/>
            <person name="Villasana D.M."/>
            <person name="Wang L."/>
            <person name="Ward-Moore S."/>
            <person name="Warren J.T."/>
            <person name="Wei X."/>
            <person name="White F."/>
            <person name="Williamson A.L."/>
            <person name="Wleczyk R."/>
            <person name="Wooden H.S."/>
            <person name="Wooden S.H."/>
            <person name="Yen J."/>
            <person name="Yoon L."/>
            <person name="Yoon V."/>
            <person name="Zorrilla S.E."/>
            <person name="Nelson D."/>
            <person name="Kucherlapati R."/>
            <person name="Weinstock G."/>
            <person name="Gibbs R.A."/>
        </authorList>
    </citation>
    <scope>NUCLEOTIDE SEQUENCE [LARGE SCALE GENOMIC DNA]</scope>
</reference>
<reference key="5">
    <citation type="journal article" date="2014" name="J. Proteomics">
        <title>An enzyme assisted RP-RPLC approach for in-depth analysis of human liver phosphoproteome.</title>
        <authorList>
            <person name="Bian Y."/>
            <person name="Song C."/>
            <person name="Cheng K."/>
            <person name="Dong M."/>
            <person name="Wang F."/>
            <person name="Huang J."/>
            <person name="Sun D."/>
            <person name="Wang L."/>
            <person name="Ye M."/>
            <person name="Zou H."/>
        </authorList>
    </citation>
    <scope>IDENTIFICATION BY MASS SPECTROMETRY [LARGE SCALE ANALYSIS]</scope>
    <source>
        <tissue>Liver</tissue>
    </source>
</reference>
<reference key="6">
    <citation type="journal article" date="2006" name="Science">
        <title>The consensus coding sequences of human breast and colorectal cancers.</title>
        <authorList>
            <person name="Sjoeblom T."/>
            <person name="Jones S."/>
            <person name="Wood L.D."/>
            <person name="Parsons D.W."/>
            <person name="Lin J."/>
            <person name="Barber T.D."/>
            <person name="Mandelker D."/>
            <person name="Leary R.J."/>
            <person name="Ptak J."/>
            <person name="Silliman N."/>
            <person name="Szabo S."/>
            <person name="Buckhaults P."/>
            <person name="Farrell C."/>
            <person name="Meeh P."/>
            <person name="Markowitz S.D."/>
            <person name="Willis J."/>
            <person name="Dawson D."/>
            <person name="Willson J.K.V."/>
            <person name="Gazdar A.F."/>
            <person name="Hartigan J."/>
            <person name="Wu L."/>
            <person name="Liu C."/>
            <person name="Parmigiani G."/>
            <person name="Park B.H."/>
            <person name="Bachman K.E."/>
            <person name="Papadopoulos N."/>
            <person name="Vogelstein B."/>
            <person name="Kinzler K.W."/>
            <person name="Velculescu V.E."/>
        </authorList>
    </citation>
    <scope>VARIANT [LARGE SCALE ANALYSIS] VAL-168</scope>
</reference>
<reference key="7">
    <citation type="journal article" date="2011" name="BMC Syst. Biol.">
        <title>Initial characterization of the human central proteome.</title>
        <authorList>
            <person name="Burkard T.R."/>
            <person name="Planyavsky M."/>
            <person name="Kaupe I."/>
            <person name="Breitwieser F.P."/>
            <person name="Buerckstuemmer T."/>
            <person name="Bennett K.L."/>
            <person name="Superti-Furga G."/>
            <person name="Colinge J."/>
        </authorList>
    </citation>
    <scope>VARIANT [LARGE SCALE ANALYSIS] THR-359</scope>
    <scope>IDENTIFICATION BY MASS SPECTROMETRY [LARGE SCALE ANALYSIS]</scope>
</reference>
<gene>
    <name type="primary">KRT76</name>
    <name type="synonym">KRT2B</name>
    <name type="synonym">KRT2P</name>
</gene>
<protein>
    <recommendedName>
        <fullName>Keratin, type II cytoskeletal 2 oral</fullName>
    </recommendedName>
    <alternativeName>
        <fullName>Cytokeratin-2P</fullName>
        <shortName>CK-2P</shortName>
        <shortName>K2P</shortName>
    </alternativeName>
    <alternativeName>
        <fullName>Keratin-76</fullName>
        <shortName>K76</shortName>
    </alternativeName>
    <alternativeName>
        <fullName>Type-II keratin Kb9</fullName>
    </alternativeName>
</protein>
<sequence length="638" mass="65841">MNRQVCKKSFSGRSQGFSGRSAVVSGSSRMSCVARSGGAGGGACGFRSGAGSFGSRSLYNLGSNKSISISVAAGSSRAGGFGGGRSSCGFAGGYGGGFGGSYGGGFGGGRGVGSGFGGAGGFGGAGGFGGPGVFGGPGSFGGPGGFGPGGFPGGIQEVIVNQSLLQPLNVEIDPQIGQVKAQEREQIKTLNNKFASFIDKVRFLEQQNKVLETKWELLQQQTTGSGPSSLEPCFESYISFLCKQLDSLLGERGNLEGELKSMQDLVEDFKKKYEDEINKRTAAENEFVGLKKDVDAAFMNKVELQAKVDSLTDEVSFLRTLYEMELSQMQSHASDTSVVLSMDNNRCLDLGSIIAEVRAQYEEIAQRSKSEAEALYQTKLGELQTTAGRHGDDLRNTKSEIMELNRMIQRLRAEIENVKKQNANLQTAIAEAEQRGEMALKDANAKLQDLQTALQKAKDDLARLLRDYQELMNVKLALDVEIATYRKLLEGEECRMSGECQSAVCISVVSNVTSTSGSSGSSRGVFGGVSGSGSGGYKGGSSSSSSSGYGVSGGSGSGYGGVSSGSTGGRGSSGSYQSSSSGSRLGGAGSISVSHSGMGSSSGSIQTSGGSGYKSGGGGSTSIRFSQTTSSSQHSSTK</sequence>
<evidence type="ECO:0000250" key="1">
    <source>
        <dbReference type="UniProtKB" id="Q6IFZ6"/>
    </source>
</evidence>
<evidence type="ECO:0000255" key="2">
    <source>
        <dbReference type="PROSITE-ProRule" id="PRU01188"/>
    </source>
</evidence>
<evidence type="ECO:0000256" key="3">
    <source>
        <dbReference type="SAM" id="MobiDB-lite"/>
    </source>
</evidence>
<evidence type="ECO:0000269" key="4">
    <source>
    </source>
</evidence>
<evidence type="ECO:0000269" key="5">
    <source>
    </source>
</evidence>
<evidence type="ECO:0000305" key="6"/>
<evidence type="ECO:0007744" key="7">
    <source>
    </source>
</evidence>
<proteinExistence type="evidence at protein level"/>
<organism>
    <name type="scientific">Homo sapiens</name>
    <name type="common">Human</name>
    <dbReference type="NCBI Taxonomy" id="9606"/>
    <lineage>
        <taxon>Eukaryota</taxon>
        <taxon>Metazoa</taxon>
        <taxon>Chordata</taxon>
        <taxon>Craniata</taxon>
        <taxon>Vertebrata</taxon>
        <taxon>Euteleostomi</taxon>
        <taxon>Mammalia</taxon>
        <taxon>Eutheria</taxon>
        <taxon>Euarchontoglires</taxon>
        <taxon>Primates</taxon>
        <taxon>Haplorrhini</taxon>
        <taxon>Catarrhini</taxon>
        <taxon>Hominidae</taxon>
        <taxon>Homo</taxon>
    </lineage>
</organism>
<name>K22O_HUMAN</name>
<accession>Q01546</accession>
<accession>B4DRR3</accession>
<accession>Q7Z795</accession>
<keyword id="KW-0175">Coiled coil</keyword>
<keyword id="KW-0403">Intermediate filament</keyword>
<keyword id="KW-0416">Keratin</keyword>
<keyword id="KW-0488">Methylation</keyword>
<keyword id="KW-1267">Proteomics identification</keyword>
<keyword id="KW-1185">Reference proteome</keyword>
<comment type="function">
    <text evidence="4">Probably contributes to terminal cornification.</text>
</comment>
<comment type="subunit">
    <text>Heterotetramer of two type I and two type II keratins.</text>
</comment>
<comment type="interaction">
    <interactant intactId="EBI-2952745">
        <id>Q01546</id>
    </interactant>
    <interactant intactId="EBI-8643161">
        <id>Q9NX04</id>
        <label>AIRIM</label>
    </interactant>
    <organismsDiffer>false</organismsDiffer>
    <experiments>3</experiments>
</comment>
<comment type="interaction">
    <interactant intactId="EBI-2952745">
        <id>Q01546</id>
    </interactant>
    <interactant intactId="EBI-747505">
        <id>Q8TAB5</id>
        <label>C1orf216</label>
    </interactant>
    <organismsDiffer>false</organismsDiffer>
    <experiments>3</experiments>
</comment>
<comment type="interaction">
    <interactant intactId="EBI-2952745">
        <id>Q01546</id>
    </interactant>
    <interactant intactId="EBI-1383687">
        <id>Q9UQM7</id>
        <label>CAMK2A</label>
    </interactant>
    <organismsDiffer>false</organismsDiffer>
    <experiments>3</experiments>
</comment>
<comment type="interaction">
    <interactant intactId="EBI-2952745">
        <id>Q01546</id>
    </interactant>
    <interactant intactId="EBI-10961624">
        <id>Q2TAC2-2</id>
        <label>CCDC57</label>
    </interactant>
    <organismsDiffer>false</organismsDiffer>
    <experiments>3</experiments>
</comment>
<comment type="interaction">
    <interactant intactId="EBI-2952745">
        <id>Q01546</id>
    </interactant>
    <interactant intactId="EBI-295634">
        <id>Q16543</id>
        <label>CDC37</label>
    </interactant>
    <organismsDiffer>false</organismsDiffer>
    <experiments>3</experiments>
</comment>
<comment type="interaction">
    <interactant intactId="EBI-2952745">
        <id>Q01546</id>
    </interactant>
    <interactant intactId="EBI-749051">
        <id>Q8IYR0</id>
        <label>CFAP206</label>
    </interactant>
    <organismsDiffer>false</organismsDiffer>
    <experiments>3</experiments>
</comment>
<comment type="interaction">
    <interactant intactId="EBI-2952745">
        <id>Q01546</id>
    </interactant>
    <interactant intactId="EBI-12082590">
        <id>Q6W0C5</id>
        <label>DPPA3</label>
    </interactant>
    <organismsDiffer>false</organismsDiffer>
    <experiments>3</experiments>
</comment>
<comment type="interaction">
    <interactant intactId="EBI-2952745">
        <id>Q01546</id>
    </interactant>
    <interactant intactId="EBI-742102">
        <id>Q8IYI6</id>
        <label>EXOC8</label>
    </interactant>
    <organismsDiffer>false</organismsDiffer>
    <experiments>3</experiments>
</comment>
<comment type="interaction">
    <interactant intactId="EBI-2952745">
        <id>Q01546</id>
    </interactant>
    <interactant intactId="EBI-8468543">
        <id>Q6PJQ5</id>
        <label>FOXR2</label>
    </interactant>
    <organismsDiffer>false</organismsDiffer>
    <experiments>3</experiments>
</comment>
<comment type="interaction">
    <interactant intactId="EBI-2952745">
        <id>Q01546</id>
    </interactant>
    <interactant intactId="EBI-725515">
        <id>O43559</id>
        <label>FRS3</label>
    </interactant>
    <organismsDiffer>false</organismsDiffer>
    <experiments>3</experiments>
</comment>
<comment type="interaction">
    <interactant intactId="EBI-2952745">
        <id>Q01546</id>
    </interactant>
    <interactant intactId="EBI-740220">
        <id>O14964</id>
        <label>HGS</label>
    </interactant>
    <organismsDiffer>false</organismsDiffer>
    <experiments>3</experiments>
</comment>
<comment type="interaction">
    <interactant intactId="EBI-2952745">
        <id>Q01546</id>
    </interactant>
    <interactant intactId="EBI-12200335">
        <id>Q9UI26-2</id>
        <label>IPO11</label>
    </interactant>
    <organismsDiffer>false</organismsDiffer>
    <experiments>3</experiments>
</comment>
<comment type="interaction">
    <interactant intactId="EBI-2952745">
        <id>Q01546</id>
    </interactant>
    <interactant intactId="EBI-10220600">
        <id>Q8NA54</id>
        <label>IQUB</label>
    </interactant>
    <organismsDiffer>false</organismsDiffer>
    <experiments>3</experiments>
</comment>
<comment type="interaction">
    <interactant intactId="EBI-2952745">
        <id>Q01546</id>
    </interactant>
    <interactant intactId="EBI-14069005">
        <id>Q9BVG8-5</id>
        <label>KIFC3</label>
    </interactant>
    <organismsDiffer>false</organismsDiffer>
    <experiments>3</experiments>
</comment>
<comment type="interaction">
    <interactant intactId="EBI-2952745">
        <id>Q01546</id>
    </interactant>
    <interactant intactId="EBI-356410">
        <id>P08779</id>
        <label>KRT16</label>
    </interactant>
    <organismsDiffer>false</organismsDiffer>
    <experiments>3</experiments>
</comment>
<comment type="interaction">
    <interactant intactId="EBI-2952745">
        <id>Q01546</id>
    </interactant>
    <interactant intactId="EBI-742094">
        <id>P35900</id>
        <label>KRT20</label>
    </interactant>
    <organismsDiffer>false</organismsDiffer>
    <experiments>3</experiments>
</comment>
<comment type="interaction">
    <interactant intactId="EBI-2952745">
        <id>Q01546</id>
    </interactant>
    <interactant intactId="EBI-11980019">
        <id>Q7Z3Z0</id>
        <label>KRT25</label>
    </interactant>
    <organismsDiffer>false</organismsDiffer>
    <experiments>3</experiments>
</comment>
<comment type="interaction">
    <interactant intactId="EBI-2952745">
        <id>Q01546</id>
    </interactant>
    <interactant intactId="EBI-3044087">
        <id>Q7Z3Y8</id>
        <label>KRT27</label>
    </interactant>
    <organismsDiffer>false</organismsDiffer>
    <experiments>3</experiments>
</comment>
<comment type="interaction">
    <interactant intactId="EBI-2952745">
        <id>Q01546</id>
    </interactant>
    <interactant intactId="EBI-948001">
        <id>Q15323</id>
        <label>KRT31</label>
    </interactant>
    <organismsDiffer>false</organismsDiffer>
    <experiments>5</experiments>
</comment>
<comment type="interaction">
    <interactant intactId="EBI-2952745">
        <id>Q01546</id>
    </interactant>
    <interactant intactId="EBI-11958506">
        <id>O76013-2</id>
        <label>KRT36</label>
    </interactant>
    <organismsDiffer>false</organismsDiffer>
    <experiments>3</experiments>
</comment>
<comment type="interaction">
    <interactant intactId="EBI-2952745">
        <id>Q01546</id>
    </interactant>
    <interactant intactId="EBI-1045716">
        <id>O76014</id>
        <label>KRT37</label>
    </interactant>
    <organismsDiffer>false</organismsDiffer>
    <experiments>3</experiments>
</comment>
<comment type="interaction">
    <interactant intactId="EBI-2952745">
        <id>Q01546</id>
    </interactant>
    <interactant intactId="EBI-1047263">
        <id>O76015</id>
        <label>KRT38</label>
    </interactant>
    <organismsDiffer>false</organismsDiffer>
    <experiments>3</experiments>
</comment>
<comment type="interaction">
    <interactant intactId="EBI-2952745">
        <id>Q01546</id>
    </interactant>
    <interactant intactId="EBI-11958242">
        <id>Q6A163</id>
        <label>KRT39</label>
    </interactant>
    <organismsDiffer>false</organismsDiffer>
    <experiments>3</experiments>
</comment>
<comment type="interaction">
    <interactant intactId="EBI-2952745">
        <id>Q01546</id>
    </interactant>
    <interactant intactId="EBI-10171697">
        <id>Q6A162</id>
        <label>KRT40</label>
    </interactant>
    <organismsDiffer>false</organismsDiffer>
    <experiments>3</experiments>
</comment>
<comment type="interaction">
    <interactant intactId="EBI-2952745">
        <id>Q01546</id>
    </interactant>
    <interactant intactId="EBI-2949715">
        <id>O95678</id>
        <label>KRT75</label>
    </interactant>
    <organismsDiffer>false</organismsDiffer>
    <experiments>3</experiments>
</comment>
<comment type="interaction">
    <interactant intactId="EBI-2952745">
        <id>Q01546</id>
    </interactant>
    <interactant intactId="EBI-9996498">
        <id>O43790</id>
        <label>KRT86</label>
    </interactant>
    <organismsDiffer>false</organismsDiffer>
    <experiments>3</experiments>
</comment>
<comment type="interaction">
    <interactant intactId="EBI-2952745">
        <id>Q01546</id>
    </interactant>
    <interactant intactId="EBI-8473670">
        <id>O95447</id>
        <label>LCA5L</label>
    </interactant>
    <organismsDiffer>false</organismsDiffer>
    <experiments>3</experiments>
</comment>
<comment type="interaction">
    <interactant intactId="EBI-2952745">
        <id>Q01546</id>
    </interactant>
    <interactant intactId="EBI-2798728">
        <id>P61968</id>
        <label>LMO4</label>
    </interactant>
    <organismsDiffer>false</organismsDiffer>
    <experiments>3</experiments>
</comment>
<comment type="interaction">
    <interactant intactId="EBI-2952745">
        <id>Q01546</id>
    </interactant>
    <interactant intactId="EBI-10172526">
        <id>Q9UJV3-2</id>
        <label>MID2</label>
    </interactant>
    <organismsDiffer>false</organismsDiffer>
    <experiments>3</experiments>
</comment>
<comment type="interaction">
    <interactant intactId="EBI-2952745">
        <id>Q01546</id>
    </interactant>
    <interactant intactId="EBI-11522433">
        <id>Q5JR59-3</id>
        <label>MTUS2</label>
    </interactant>
    <organismsDiffer>false</organismsDiffer>
    <experiments>3</experiments>
</comment>
<comment type="interaction">
    <interactant intactId="EBI-2952745">
        <id>Q01546</id>
    </interactant>
    <interactant intactId="EBI-10271199">
        <id>Q8NI38</id>
        <label>NFKBID</label>
    </interactant>
    <organismsDiffer>false</organismsDiffer>
    <experiments>3</experiments>
</comment>
<comment type="interaction">
    <interactant intactId="EBI-2952745">
        <id>Q01546</id>
    </interactant>
    <interactant intactId="EBI-1055079">
        <id>O15160</id>
        <label>POLR1C</label>
    </interactant>
    <organismsDiffer>false</organismsDiffer>
    <experiments>5</experiments>
</comment>
<comment type="interaction">
    <interactant intactId="EBI-2952745">
        <id>Q01546</id>
    </interactant>
    <interactant intactId="EBI-748350">
        <id>Q9UHP6</id>
        <label>RSPH14</label>
    </interactant>
    <organismsDiffer>false</organismsDiffer>
    <experiments>3</experiments>
</comment>
<comment type="interaction">
    <interactant intactId="EBI-2952745">
        <id>Q01546</id>
    </interactant>
    <interactant intactId="EBI-949753">
        <id>Q63HR2</id>
        <label>TNS2</label>
    </interactant>
    <organismsDiffer>false</organismsDiffer>
    <experiments>3</experiments>
</comment>
<comment type="interaction">
    <interactant intactId="EBI-2952745">
        <id>Q01546</id>
    </interactant>
    <interactant intactId="EBI-740098">
        <id>P36406</id>
        <label>TRIM23</label>
    </interactant>
    <organismsDiffer>false</organismsDiffer>
    <experiments>3</experiments>
</comment>
<comment type="interaction">
    <interactant intactId="EBI-2952745">
        <id>Q01546</id>
    </interactant>
    <interactant intactId="EBI-719493">
        <id>P14373</id>
        <label>TRIM27</label>
    </interactant>
    <organismsDiffer>false</organismsDiffer>
    <experiments>3</experiments>
</comment>
<comment type="interaction">
    <interactant intactId="EBI-2952745">
        <id>Q01546</id>
    </interactant>
    <interactant intactId="EBI-2130429">
        <id>Q9BYV2</id>
        <label>TRIM54</label>
    </interactant>
    <organismsDiffer>false</organismsDiffer>
    <experiments>3</experiments>
</comment>
<comment type="interaction">
    <interactant intactId="EBI-2952745">
        <id>Q01546</id>
    </interactant>
    <interactant intactId="EBI-744794">
        <id>Q9BZW7</id>
        <label>TSGA10</label>
    </interactant>
    <organismsDiffer>false</organismsDiffer>
    <experiments>3</experiments>
</comment>
<comment type="interaction">
    <interactant intactId="EBI-2952745">
        <id>Q01546</id>
    </interactant>
    <interactant intactId="EBI-625509">
        <id>Q8N720</id>
        <label>ZNF655</label>
    </interactant>
    <organismsDiffer>false</organismsDiffer>
    <experiments>3</experiments>
</comment>
<comment type="developmental stage">
    <text evidence="4">Synthesized during maturation of epidermal keratinocytes.</text>
</comment>
<comment type="miscellaneous">
    <text>There are two types of cytoskeletal and microfibrillar keratin: I (acidic; 40-55 kDa) and II (neutral to basic; 56-70 kDa).</text>
</comment>
<comment type="similarity">
    <text evidence="2">Belongs to the intermediate filament family.</text>
</comment>
<comment type="sequence caution" evidence="6">
    <conflict type="erroneous termination">
        <sequence resource="EMBL-CDS" id="BAG61375"/>
    </conflict>
    <text>Truncated C-terminus.</text>
</comment>
<feature type="chain" id="PRO_0000063714" description="Keratin, type II cytoskeletal 2 oral">
    <location>
        <begin position="1"/>
        <end position="638"/>
    </location>
</feature>
<feature type="domain" description="IF rod" evidence="2">
    <location>
        <begin position="183"/>
        <end position="496"/>
    </location>
</feature>
<feature type="region of interest" description="Head">
    <location>
        <begin position="1"/>
        <end position="182"/>
    </location>
</feature>
<feature type="region of interest" description="Coil 1A">
    <location>
        <begin position="183"/>
        <end position="218"/>
    </location>
</feature>
<feature type="region of interest" description="Linker 1">
    <location>
        <begin position="219"/>
        <end position="237"/>
    </location>
</feature>
<feature type="region of interest" description="Coil 1B">
    <location>
        <begin position="238"/>
        <end position="329"/>
    </location>
</feature>
<feature type="region of interest" description="Linker 12">
    <location>
        <begin position="330"/>
        <end position="353"/>
    </location>
</feature>
<feature type="region of interest" description="Coil 2">
    <location>
        <begin position="354"/>
        <end position="492"/>
    </location>
</feature>
<feature type="region of interest" description="Tail">
    <location>
        <begin position="493"/>
        <end position="638"/>
    </location>
</feature>
<feature type="region of interest" description="Disordered" evidence="3">
    <location>
        <begin position="532"/>
        <end position="638"/>
    </location>
</feature>
<feature type="compositionally biased region" description="Low complexity" evidence="3">
    <location>
        <begin position="540"/>
        <end position="549"/>
    </location>
</feature>
<feature type="compositionally biased region" description="Gly residues" evidence="3">
    <location>
        <begin position="550"/>
        <end position="572"/>
    </location>
</feature>
<feature type="compositionally biased region" description="Low complexity" evidence="3">
    <location>
        <begin position="573"/>
        <end position="583"/>
    </location>
</feature>
<feature type="compositionally biased region" description="Low complexity" evidence="3">
    <location>
        <begin position="590"/>
        <end position="608"/>
    </location>
</feature>
<feature type="compositionally biased region" description="Gly residues" evidence="3">
    <location>
        <begin position="609"/>
        <end position="620"/>
    </location>
</feature>
<feature type="compositionally biased region" description="Low complexity" evidence="3">
    <location>
        <begin position="626"/>
        <end position="638"/>
    </location>
</feature>
<feature type="modified residue" description="Omega-N-methylarginine" evidence="1">
    <location>
        <position position="85"/>
    </location>
</feature>
<feature type="modified residue" description="Omega-N-methylarginine" evidence="1">
    <location>
        <position position="110"/>
    </location>
</feature>
<feature type="modified residue" description="Omega-N-methylarginine" evidence="1">
    <location>
        <position position="584"/>
    </location>
</feature>
<feature type="sequence variant" id="VAR_036368" description="In a breast cancer sample; somatic mutation." evidence="5">
    <original>L</original>
    <variation>V</variation>
    <location>
        <position position="168"/>
    </location>
</feature>
<feature type="sequence variant" id="VAR_028425" description="In dbSNP:rs11170271.">
    <original>A</original>
    <variation>T</variation>
    <location>
        <position position="283"/>
    </location>
</feature>
<feature type="sequence variant" id="VAR_028426" description="In dbSNP:rs6580904." evidence="4 7">
    <original>A</original>
    <variation>T</variation>
    <location>
        <position position="359"/>
    </location>
</feature>
<feature type="sequence variant" id="VAR_028427" description="In dbSNP:rs2280480.">
    <original>T</original>
    <variation>M</variation>
    <location>
        <position position="629"/>
    </location>
</feature>
<feature type="sequence conflict" description="In Ref. 3; BAG61375." evidence="6" ref="3">
    <original>E</original>
    <variation>K</variation>
    <location>
        <position position="356"/>
    </location>
</feature>